<accession>A8AMN0</accession>
<dbReference type="EC" id="2.5.1.75" evidence="1"/>
<dbReference type="EMBL" id="CP000822">
    <property type="protein sequence ID" value="ABV14743.1"/>
    <property type="molecule type" value="Genomic_DNA"/>
</dbReference>
<dbReference type="RefSeq" id="WP_012134440.1">
    <property type="nucleotide sequence ID" value="NC_009792.1"/>
</dbReference>
<dbReference type="SMR" id="A8AMN0"/>
<dbReference type="STRING" id="290338.CKO_03664"/>
<dbReference type="GeneID" id="45137368"/>
<dbReference type="KEGG" id="cko:CKO_03664"/>
<dbReference type="HOGENOM" id="CLU_032616_0_0_6"/>
<dbReference type="OrthoDB" id="9776390at2"/>
<dbReference type="Proteomes" id="UP000008148">
    <property type="component" value="Chromosome"/>
</dbReference>
<dbReference type="GO" id="GO:0005524">
    <property type="term" value="F:ATP binding"/>
    <property type="evidence" value="ECO:0007669"/>
    <property type="project" value="UniProtKB-UniRule"/>
</dbReference>
<dbReference type="GO" id="GO:0052381">
    <property type="term" value="F:tRNA dimethylallyltransferase activity"/>
    <property type="evidence" value="ECO:0007669"/>
    <property type="project" value="UniProtKB-UniRule"/>
</dbReference>
<dbReference type="GO" id="GO:0006400">
    <property type="term" value="P:tRNA modification"/>
    <property type="evidence" value="ECO:0007669"/>
    <property type="project" value="TreeGrafter"/>
</dbReference>
<dbReference type="FunFam" id="1.10.20.140:FF:000001">
    <property type="entry name" value="tRNA dimethylallyltransferase"/>
    <property type="match status" value="1"/>
</dbReference>
<dbReference type="FunFam" id="1.10.287.890:FF:000001">
    <property type="entry name" value="tRNA dimethylallyltransferase"/>
    <property type="match status" value="1"/>
</dbReference>
<dbReference type="Gene3D" id="1.10.20.140">
    <property type="match status" value="1"/>
</dbReference>
<dbReference type="Gene3D" id="3.40.50.300">
    <property type="entry name" value="P-loop containing nucleotide triphosphate hydrolases"/>
    <property type="match status" value="1"/>
</dbReference>
<dbReference type="HAMAP" id="MF_00185">
    <property type="entry name" value="IPP_trans"/>
    <property type="match status" value="1"/>
</dbReference>
<dbReference type="InterPro" id="IPR039657">
    <property type="entry name" value="Dimethylallyltransferase"/>
</dbReference>
<dbReference type="InterPro" id="IPR018022">
    <property type="entry name" value="IPT"/>
</dbReference>
<dbReference type="InterPro" id="IPR027417">
    <property type="entry name" value="P-loop_NTPase"/>
</dbReference>
<dbReference type="NCBIfam" id="TIGR00174">
    <property type="entry name" value="miaA"/>
    <property type="match status" value="1"/>
</dbReference>
<dbReference type="PANTHER" id="PTHR11088">
    <property type="entry name" value="TRNA DIMETHYLALLYLTRANSFERASE"/>
    <property type="match status" value="1"/>
</dbReference>
<dbReference type="PANTHER" id="PTHR11088:SF60">
    <property type="entry name" value="TRNA DIMETHYLALLYLTRANSFERASE"/>
    <property type="match status" value="1"/>
</dbReference>
<dbReference type="Pfam" id="PF01715">
    <property type="entry name" value="IPPT"/>
    <property type="match status" value="1"/>
</dbReference>
<dbReference type="SUPFAM" id="SSF52540">
    <property type="entry name" value="P-loop containing nucleoside triphosphate hydrolases"/>
    <property type="match status" value="1"/>
</dbReference>
<comment type="function">
    <text evidence="1">Catalyzes the transfer of a dimethylallyl group onto the adenine at position 37 in tRNAs that read codons beginning with uridine, leading to the formation of N6-(dimethylallyl)adenosine (i(6)A).</text>
</comment>
<comment type="catalytic activity">
    <reaction evidence="1">
        <text>adenosine(37) in tRNA + dimethylallyl diphosphate = N(6)-dimethylallyladenosine(37) in tRNA + diphosphate</text>
        <dbReference type="Rhea" id="RHEA:26482"/>
        <dbReference type="Rhea" id="RHEA-COMP:10162"/>
        <dbReference type="Rhea" id="RHEA-COMP:10375"/>
        <dbReference type="ChEBI" id="CHEBI:33019"/>
        <dbReference type="ChEBI" id="CHEBI:57623"/>
        <dbReference type="ChEBI" id="CHEBI:74411"/>
        <dbReference type="ChEBI" id="CHEBI:74415"/>
        <dbReference type="EC" id="2.5.1.75"/>
    </reaction>
</comment>
<comment type="cofactor">
    <cofactor evidence="1">
        <name>Mg(2+)</name>
        <dbReference type="ChEBI" id="CHEBI:18420"/>
    </cofactor>
</comment>
<comment type="subunit">
    <text evidence="1">Monomer.</text>
</comment>
<comment type="similarity">
    <text evidence="1">Belongs to the IPP transferase family.</text>
</comment>
<protein>
    <recommendedName>
        <fullName evidence="1">tRNA dimethylallyltransferase</fullName>
        <ecNumber evidence="1">2.5.1.75</ecNumber>
    </recommendedName>
    <alternativeName>
        <fullName evidence="1">Dimethylallyl diphosphate:tRNA dimethylallyltransferase</fullName>
        <shortName evidence="1">DMAPP:tRNA dimethylallyltransferase</shortName>
        <shortName evidence="1">DMATase</shortName>
    </alternativeName>
    <alternativeName>
        <fullName evidence="1">Isopentenyl-diphosphate:tRNA isopentenyltransferase</fullName>
        <shortName evidence="1">IPP transferase</shortName>
        <shortName evidence="1">IPPT</shortName>
        <shortName evidence="1">IPTase</shortName>
    </alternativeName>
</protein>
<proteinExistence type="inferred from homology"/>
<name>MIAA_CITK8</name>
<sequence>MSDVSKASLPKAIFLMGPTASGKTALAIELRKVLPVELISVDSALIYRGMDIGTAKPTASELKAAPHRLLDILDPAQAYSAADFRRDALAEMAEITAAGRIPLLVGGTMLYFKALLEGLSPLPSAEPEIRARIEQQAAEQGWDVLHRQLQDIDPVAAARIHPNDPQRLSRALEVFFISGKTLTELTQTSGDALPYQVHQFAIAPASRELLHQRIEQRFHQMLASGFEAEVRALFARGDLHTDLPSIRCVGYRQMWSYIEGEISYDEMVYRGVCATRQLAKRQVTWLRGWEGVRWLDSEKPDQARNEVLQVVGAIAN</sequence>
<gene>
    <name evidence="1" type="primary">miaA</name>
    <name type="ordered locus">CKO_03664</name>
</gene>
<keyword id="KW-0067">ATP-binding</keyword>
<keyword id="KW-0460">Magnesium</keyword>
<keyword id="KW-0547">Nucleotide-binding</keyword>
<keyword id="KW-1185">Reference proteome</keyword>
<keyword id="KW-0808">Transferase</keyword>
<keyword id="KW-0819">tRNA processing</keyword>
<reference key="1">
    <citation type="submission" date="2007-08" db="EMBL/GenBank/DDBJ databases">
        <authorList>
            <consortium name="The Citrobacter koseri Genome Sequencing Project"/>
            <person name="McClelland M."/>
            <person name="Sanderson E.K."/>
            <person name="Porwollik S."/>
            <person name="Spieth J."/>
            <person name="Clifton W.S."/>
            <person name="Latreille P."/>
            <person name="Courtney L."/>
            <person name="Wang C."/>
            <person name="Pepin K."/>
            <person name="Bhonagiri V."/>
            <person name="Nash W."/>
            <person name="Johnson M."/>
            <person name="Thiruvilangam P."/>
            <person name="Wilson R."/>
        </authorList>
    </citation>
    <scope>NUCLEOTIDE SEQUENCE [LARGE SCALE GENOMIC DNA]</scope>
    <source>
        <strain>ATCC BAA-895 / CDC 4225-83 / SGSC4696</strain>
    </source>
</reference>
<evidence type="ECO:0000255" key="1">
    <source>
        <dbReference type="HAMAP-Rule" id="MF_00185"/>
    </source>
</evidence>
<feature type="chain" id="PRO_1000020584" description="tRNA dimethylallyltransferase">
    <location>
        <begin position="1"/>
        <end position="316"/>
    </location>
</feature>
<feature type="region of interest" description="Interaction with substrate tRNA" evidence="1">
    <location>
        <begin position="42"/>
        <end position="45"/>
    </location>
</feature>
<feature type="region of interest" description="Interaction with substrate tRNA" evidence="1">
    <location>
        <begin position="166"/>
        <end position="170"/>
    </location>
</feature>
<feature type="region of interest" description="Interaction with substrate tRNA" evidence="1">
    <location>
        <begin position="247"/>
        <end position="252"/>
    </location>
</feature>
<feature type="binding site" evidence="1">
    <location>
        <begin position="17"/>
        <end position="24"/>
    </location>
    <ligand>
        <name>ATP</name>
        <dbReference type="ChEBI" id="CHEBI:30616"/>
    </ligand>
</feature>
<feature type="binding site" evidence="1">
    <location>
        <begin position="19"/>
        <end position="24"/>
    </location>
    <ligand>
        <name>substrate</name>
    </ligand>
</feature>
<feature type="site" description="Interaction with substrate tRNA" evidence="1">
    <location>
        <position position="108"/>
    </location>
</feature>
<feature type="site" description="Interaction with substrate tRNA" evidence="1">
    <location>
        <position position="130"/>
    </location>
</feature>
<organism>
    <name type="scientific">Citrobacter koseri (strain ATCC BAA-895 / CDC 4225-83 / SGSC4696)</name>
    <dbReference type="NCBI Taxonomy" id="290338"/>
    <lineage>
        <taxon>Bacteria</taxon>
        <taxon>Pseudomonadati</taxon>
        <taxon>Pseudomonadota</taxon>
        <taxon>Gammaproteobacteria</taxon>
        <taxon>Enterobacterales</taxon>
        <taxon>Enterobacteriaceae</taxon>
        <taxon>Citrobacter</taxon>
    </lineage>
</organism>